<keyword id="KW-0002">3D-structure</keyword>
<keyword id="KW-0413">Isomerase</keyword>
<keyword id="KW-0460">Magnesium</keyword>
<keyword id="KW-0479">Metal-binding</keyword>
<keyword id="KW-1185">Reference proteome</keyword>
<sequence>MKIADIQVRTEHFPLTRPYRIAFRSIEEIDNLIVEIRTADGLLGLGAASPERHVTGETLEACHAALDHDRLGWLMGRDIRTLPRLCRELAERLPAAPAARAALDMALHDLVAQCLGLPLVEILGRAHDSLPTSVTIGIKPVEETLAEAREHLALGFRVLKVKLCGDEEQDFERLRRLHETLAGRAVVRVDPNQSYDRDGLLRLDRLVQELGIEFIEQPFPAGRTDWLRALPKAIRRRIAADESLLGPADAFALAAPPAACGIFNIKLMKCGGLAPARRIATIAETAGIDLMWGCMDESRISIAAALHAALACPATRYLDLDGSFDLARDVAEGGFILEDGRLRVTERPGLGLVYPD</sequence>
<accession>Q607C7</accession>
<name>KRDE_METCA</name>
<protein>
    <recommendedName>
        <fullName>L-Lys-D/L-Arg epimerase</fullName>
        <ecNumber>5.1.1.-</ecNumber>
    </recommendedName>
    <alternativeName>
        <fullName>Cationic dipeptide epimerase</fullName>
    </alternativeName>
</protein>
<evidence type="ECO:0000250" key="1"/>
<evidence type="ECO:0000269" key="2">
    <source>
    </source>
</evidence>
<evidence type="ECO:0000305" key="3"/>
<evidence type="ECO:0000305" key="4">
    <source>
    </source>
</evidence>
<evidence type="ECO:0007829" key="5">
    <source>
        <dbReference type="PDB" id="3RO6"/>
    </source>
</evidence>
<feature type="chain" id="PRO_0000429657" description="L-Lys-D/L-Arg epimerase">
    <location>
        <begin position="1"/>
        <end position="356"/>
    </location>
</feature>
<feature type="binding site">
    <location>
        <position position="135"/>
    </location>
    <ligand>
        <name>substrate</name>
    </ligand>
</feature>
<feature type="binding site">
    <location>
        <begin position="160"/>
        <end position="162"/>
    </location>
    <ligand>
        <name>substrate</name>
    </ligand>
</feature>
<feature type="binding site" evidence="2">
    <location>
        <position position="190"/>
    </location>
    <ligand>
        <name>Mg(2+)</name>
        <dbReference type="ChEBI" id="CHEBI:18420"/>
    </ligand>
</feature>
<feature type="binding site" evidence="2">
    <location>
        <position position="216"/>
    </location>
    <ligand>
        <name>Mg(2+)</name>
        <dbReference type="ChEBI" id="CHEBI:18420"/>
    </ligand>
</feature>
<feature type="binding site" evidence="2">
    <location>
        <position position="241"/>
    </location>
    <ligand>
        <name>Mg(2+)</name>
        <dbReference type="ChEBI" id="CHEBI:18420"/>
    </ligand>
</feature>
<feature type="binding site" evidence="1">
    <location>
        <position position="266"/>
    </location>
    <ligand>
        <name>substrate</name>
    </ligand>
</feature>
<feature type="binding site">
    <location>
        <position position="296"/>
    </location>
    <ligand>
        <name>substrate</name>
    </ligand>
</feature>
<feature type="binding site">
    <location>
        <begin position="319"/>
        <end position="321"/>
    </location>
    <ligand>
        <name>substrate</name>
    </ligand>
</feature>
<feature type="strand" evidence="5">
    <location>
        <begin position="2"/>
        <end position="15"/>
    </location>
</feature>
<feature type="strand" evidence="5">
    <location>
        <begin position="28"/>
        <end position="38"/>
    </location>
</feature>
<feature type="strand" evidence="5">
    <location>
        <begin position="43"/>
        <end position="48"/>
    </location>
</feature>
<feature type="helix" evidence="5">
    <location>
        <begin position="52"/>
        <end position="55"/>
    </location>
</feature>
<feature type="helix" evidence="5">
    <location>
        <begin position="59"/>
        <end position="66"/>
    </location>
</feature>
<feature type="helix" evidence="5">
    <location>
        <begin position="68"/>
        <end position="70"/>
    </location>
</feature>
<feature type="turn" evidence="5">
    <location>
        <begin position="72"/>
        <end position="76"/>
    </location>
</feature>
<feature type="helix" evidence="5">
    <location>
        <begin position="79"/>
        <end position="81"/>
    </location>
</feature>
<feature type="helix" evidence="5">
    <location>
        <begin position="82"/>
        <end position="92"/>
    </location>
</feature>
<feature type="helix" evidence="5">
    <location>
        <begin position="97"/>
        <end position="115"/>
    </location>
</feature>
<feature type="helix" evidence="5">
    <location>
        <begin position="119"/>
        <end position="122"/>
    </location>
</feature>
<feature type="strand" evidence="5">
    <location>
        <begin position="130"/>
        <end position="132"/>
    </location>
</feature>
<feature type="strand" evidence="5">
    <location>
        <begin position="134"/>
        <end position="136"/>
    </location>
</feature>
<feature type="helix" evidence="5">
    <location>
        <begin position="141"/>
        <end position="153"/>
    </location>
</feature>
<feature type="strand" evidence="5">
    <location>
        <begin position="158"/>
        <end position="162"/>
    </location>
</feature>
<feature type="helix" evidence="5">
    <location>
        <begin position="167"/>
        <end position="181"/>
    </location>
</feature>
<feature type="strand" evidence="5">
    <location>
        <begin position="184"/>
        <end position="190"/>
    </location>
</feature>
<feature type="helix" evidence="5">
    <location>
        <begin position="197"/>
        <end position="209"/>
    </location>
</feature>
<feature type="helix" evidence="5">
    <location>
        <begin position="224"/>
        <end position="228"/>
    </location>
</feature>
<feature type="helix" evidence="5">
    <location>
        <begin position="232"/>
        <end position="236"/>
    </location>
</feature>
<feature type="strand" evidence="5">
    <location>
        <begin position="238"/>
        <end position="241"/>
    </location>
</feature>
<feature type="helix" evidence="5">
    <location>
        <begin position="247"/>
        <end position="254"/>
    </location>
</feature>
<feature type="strand" evidence="5">
    <location>
        <begin position="255"/>
        <end position="257"/>
    </location>
</feature>
<feature type="strand" evidence="5">
    <location>
        <begin position="261"/>
        <end position="265"/>
    </location>
</feature>
<feature type="helix" evidence="5">
    <location>
        <begin position="267"/>
        <end position="270"/>
    </location>
</feature>
<feature type="helix" evidence="5">
    <location>
        <begin position="273"/>
        <end position="286"/>
    </location>
</feature>
<feature type="strand" evidence="5">
    <location>
        <begin position="289"/>
        <end position="292"/>
    </location>
</feature>
<feature type="helix" evidence="5">
    <location>
        <begin position="299"/>
        <end position="310"/>
    </location>
</feature>
<feature type="strand" evidence="5">
    <location>
        <begin position="315"/>
        <end position="318"/>
    </location>
</feature>
<feature type="turn" evidence="5">
    <location>
        <begin position="322"/>
        <end position="325"/>
    </location>
</feature>
<feature type="strand" evidence="5">
    <location>
        <begin position="332"/>
        <end position="334"/>
    </location>
</feature>
<feature type="strand" evidence="5">
    <location>
        <begin position="336"/>
        <end position="338"/>
    </location>
</feature>
<feature type="strand" evidence="5">
    <location>
        <begin position="341"/>
        <end position="343"/>
    </location>
</feature>
<feature type="strand" evidence="5">
    <location>
        <begin position="346"/>
        <end position="349"/>
    </location>
</feature>
<reference key="1">
    <citation type="journal article" date="2004" name="PLoS Biol.">
        <title>Genomic insights into methanotrophy: the complete genome sequence of Methylococcus capsulatus (Bath).</title>
        <authorList>
            <person name="Ward N.L."/>
            <person name="Larsen O."/>
            <person name="Sakwa J."/>
            <person name="Bruseth L."/>
            <person name="Khouri H.M."/>
            <person name="Durkin A.S."/>
            <person name="Dimitrov G."/>
            <person name="Jiang L."/>
            <person name="Scanlan D."/>
            <person name="Kang K.H."/>
            <person name="Lewis M.R."/>
            <person name="Nelson K.E."/>
            <person name="Methe B.A."/>
            <person name="Wu M."/>
            <person name="Heidelberg J.F."/>
            <person name="Paulsen I.T."/>
            <person name="Fouts D.E."/>
            <person name="Ravel J."/>
            <person name="Tettelin H."/>
            <person name="Ren Q."/>
            <person name="Read T.D."/>
            <person name="DeBoy R.T."/>
            <person name="Seshadri R."/>
            <person name="Salzberg S.L."/>
            <person name="Jensen H.B."/>
            <person name="Birkeland N.K."/>
            <person name="Nelson W.C."/>
            <person name="Dodson R.J."/>
            <person name="Grindhaug S.H."/>
            <person name="Holt I.E."/>
            <person name="Eidhammer I."/>
            <person name="Jonasen I."/>
            <person name="Vanaken S."/>
            <person name="Utterback T.R."/>
            <person name="Feldblyum T.V."/>
            <person name="Fraser C.M."/>
            <person name="Lillehaug J.R."/>
            <person name="Eisen J.A."/>
        </authorList>
    </citation>
    <scope>NUCLEOTIDE SEQUENCE [LARGE SCALE GENOMIC DNA]</scope>
    <source>
        <strain>ATCC 33009 / NCIMB 11132 / Bath</strain>
    </source>
</reference>
<reference key="2">
    <citation type="journal article" date="2012" name="Proc. Natl. Acad. Sci. U.S.A.">
        <title>Homology models guide discovery of diverse enzyme specificities among dipeptide epimerases in the enolase superfamily.</title>
        <authorList>
            <person name="Lukk T."/>
            <person name="Sakai A."/>
            <person name="Kalyanaraman C."/>
            <person name="Brown S.D."/>
            <person name="Imker H.J."/>
            <person name="Song L."/>
            <person name="Fedorov A.A."/>
            <person name="Fedorov E.V."/>
            <person name="Toro R."/>
            <person name="Hillerich B."/>
            <person name="Seidel R."/>
            <person name="Patskovsky Y."/>
            <person name="Vetting M.W."/>
            <person name="Nair S.K."/>
            <person name="Babbitt P.C."/>
            <person name="Almo S.C."/>
            <person name="Gerlt J.A."/>
            <person name="Jacobson M.P."/>
        </authorList>
    </citation>
    <scope>X-RAY CRYSTALLOGRAPHY (2.20 ANGSTROMS) OF APOPROTEIN AND IN COMPLEX WITH MAGNESIUM AND L-ARG-D-LYS DIPEPTIDE</scope>
    <scope>FUNCTION</scope>
    <scope>COFACTOR</scope>
    <scope>BIOPHYSICOCHEMICAL PROPERTIES</scope>
</reference>
<gene>
    <name type="ordered locus">MCA1834</name>
</gene>
<proteinExistence type="evidence at protein level"/>
<comment type="function">
    <text evidence="2">Catalyzes the epimerization of L-Lys-L-Arg to L-Lys-D-Arg. Can also catalyze the epimerization of other cationic dipeptides, such as L-Arg-L-Arg, L-Lys-L-Lys and L-Lys-L-His, but with lower efficiency (in vitro).</text>
</comment>
<comment type="cofactor">
    <cofactor evidence="2">
        <name>Mg(2+)</name>
        <dbReference type="ChEBI" id="CHEBI:18420"/>
    </cofactor>
    <text evidence="2">Binds 1 Mg(2+) ion per subunit.</text>
</comment>
<comment type="biophysicochemical properties">
    <kinetics>
        <KM evidence="2">0.15 mM for L-Lys-L-Lys</KM>
        <KM evidence="2">0.19 mM for L-Arg-L-Arg</KM>
        <KM evidence="2">0.44 mM for L-Lys-L-Arg</KM>
        <KM evidence="2">0.88 mM for L-Lys-L-His</KM>
        <text>kcat is 8.4 sec(-1) for epimerization of L-Lys-L-Arg. kcat is 0.029 sec(-1) for epimerization of L-Lys-L-Lys. kcat is 0.72 sec(-1) for epimerization of L-Arg-L-Arg.</text>
    </kinetics>
</comment>
<comment type="miscellaneous">
    <text evidence="4">Part of a large, functionally divergent protein family. Was initially predicted to have chloromuconate cycloisomerase activity, based on sequence similarity. Protein modeling and substrate docking was used to predict the substrate specificity, prior to biochemical analysis (PubMed:22392983).</text>
</comment>
<comment type="similarity">
    <text evidence="3">Belongs to the mandelate racemase/muconate lactonizing enzyme family.</text>
</comment>
<dbReference type="EC" id="5.1.1.-"/>
<dbReference type="EMBL" id="AE017282">
    <property type="protein sequence ID" value="AAU91952.1"/>
    <property type="molecule type" value="Genomic_DNA"/>
</dbReference>
<dbReference type="RefSeq" id="WP_010961086.1">
    <property type="nucleotide sequence ID" value="NC_002977.6"/>
</dbReference>
<dbReference type="PDB" id="3RIT">
    <property type="method" value="X-ray"/>
    <property type="resolution" value="2.70 A"/>
    <property type="chains" value="A/B/C/D/E=1-356"/>
</dbReference>
<dbReference type="PDB" id="3RO6">
    <property type="method" value="X-ray"/>
    <property type="resolution" value="2.20 A"/>
    <property type="chains" value="A/B/C/D/E/F=1-356"/>
</dbReference>
<dbReference type="PDBsum" id="3RIT"/>
<dbReference type="PDBsum" id="3RO6"/>
<dbReference type="SMR" id="Q607C7"/>
<dbReference type="STRING" id="243233.MCA1834"/>
<dbReference type="DNASU" id="3103133"/>
<dbReference type="GeneID" id="88224080"/>
<dbReference type="KEGG" id="mca:MCA1834"/>
<dbReference type="eggNOG" id="COG4948">
    <property type="taxonomic scope" value="Bacteria"/>
</dbReference>
<dbReference type="HOGENOM" id="CLU_030273_4_0_6"/>
<dbReference type="EvolutionaryTrace" id="Q607C7"/>
<dbReference type="Proteomes" id="UP000006821">
    <property type="component" value="Chromosome"/>
</dbReference>
<dbReference type="GO" id="GO:0000287">
    <property type="term" value="F:magnesium ion binding"/>
    <property type="evidence" value="ECO:0000314"/>
    <property type="project" value="UniProtKB"/>
</dbReference>
<dbReference type="GO" id="GO:0016854">
    <property type="term" value="F:racemase and epimerase activity"/>
    <property type="evidence" value="ECO:0000314"/>
    <property type="project" value="UniProtKB"/>
</dbReference>
<dbReference type="GO" id="GO:0016855">
    <property type="term" value="F:racemase and epimerase activity, acting on amino acids and derivatives"/>
    <property type="evidence" value="ECO:0007669"/>
    <property type="project" value="InterPro"/>
</dbReference>
<dbReference type="GO" id="GO:0009063">
    <property type="term" value="P:amino acid catabolic process"/>
    <property type="evidence" value="ECO:0007669"/>
    <property type="project" value="InterPro"/>
</dbReference>
<dbReference type="GO" id="GO:0006518">
    <property type="term" value="P:peptide metabolic process"/>
    <property type="evidence" value="ECO:0000314"/>
    <property type="project" value="UniProtKB"/>
</dbReference>
<dbReference type="CDD" id="cd03319">
    <property type="entry name" value="L-Ala-DL-Glu_epimerase"/>
    <property type="match status" value="1"/>
</dbReference>
<dbReference type="FunFam" id="3.30.390.10:FF:000009">
    <property type="entry name" value="Hydrophobic dipeptide epimerase"/>
    <property type="match status" value="1"/>
</dbReference>
<dbReference type="FunFam" id="3.20.20.120:FF:000030">
    <property type="entry name" value="L-Lys-D/L-Arg epimerase"/>
    <property type="match status" value="1"/>
</dbReference>
<dbReference type="Gene3D" id="3.20.20.120">
    <property type="entry name" value="Enolase-like C-terminal domain"/>
    <property type="match status" value="1"/>
</dbReference>
<dbReference type="Gene3D" id="3.30.390.10">
    <property type="entry name" value="Enolase-like, N-terminal domain"/>
    <property type="match status" value="1"/>
</dbReference>
<dbReference type="InterPro" id="IPR034603">
    <property type="entry name" value="Dipeptide_epimerase"/>
</dbReference>
<dbReference type="InterPro" id="IPR036849">
    <property type="entry name" value="Enolase-like_C_sf"/>
</dbReference>
<dbReference type="InterPro" id="IPR029017">
    <property type="entry name" value="Enolase-like_N"/>
</dbReference>
<dbReference type="InterPro" id="IPR029065">
    <property type="entry name" value="Enolase_C-like"/>
</dbReference>
<dbReference type="InterPro" id="IPR018110">
    <property type="entry name" value="Mandel_Rmase/mucon_lact_enz_CS"/>
</dbReference>
<dbReference type="InterPro" id="IPR013342">
    <property type="entry name" value="Mandelate_racemase_C"/>
</dbReference>
<dbReference type="InterPro" id="IPR013341">
    <property type="entry name" value="Mandelate_racemase_N_dom"/>
</dbReference>
<dbReference type="PANTHER" id="PTHR48073:SF2">
    <property type="entry name" value="O-SUCCINYLBENZOATE SYNTHASE"/>
    <property type="match status" value="1"/>
</dbReference>
<dbReference type="PANTHER" id="PTHR48073">
    <property type="entry name" value="O-SUCCINYLBENZOATE SYNTHASE-RELATED"/>
    <property type="match status" value="1"/>
</dbReference>
<dbReference type="Pfam" id="PF13378">
    <property type="entry name" value="MR_MLE_C"/>
    <property type="match status" value="1"/>
</dbReference>
<dbReference type="Pfam" id="PF02746">
    <property type="entry name" value="MR_MLE_N"/>
    <property type="match status" value="1"/>
</dbReference>
<dbReference type="SFLD" id="SFLDS00001">
    <property type="entry name" value="Enolase"/>
    <property type="match status" value="1"/>
</dbReference>
<dbReference type="SFLD" id="SFLDG00180">
    <property type="entry name" value="muconate_cycloisomerase"/>
    <property type="match status" value="1"/>
</dbReference>
<dbReference type="SMART" id="SM00922">
    <property type="entry name" value="MR_MLE"/>
    <property type="match status" value="1"/>
</dbReference>
<dbReference type="SUPFAM" id="SSF51604">
    <property type="entry name" value="Enolase C-terminal domain-like"/>
    <property type="match status" value="1"/>
</dbReference>
<dbReference type="SUPFAM" id="SSF54826">
    <property type="entry name" value="Enolase N-terminal domain-like"/>
    <property type="match status" value="1"/>
</dbReference>
<dbReference type="PROSITE" id="PS00909">
    <property type="entry name" value="MR_MLE_2"/>
    <property type="match status" value="1"/>
</dbReference>
<organism>
    <name type="scientific">Methylococcus capsulatus (strain ATCC 33009 / NCIMB 11132 / Bath)</name>
    <dbReference type="NCBI Taxonomy" id="243233"/>
    <lineage>
        <taxon>Bacteria</taxon>
        <taxon>Pseudomonadati</taxon>
        <taxon>Pseudomonadota</taxon>
        <taxon>Gammaproteobacteria</taxon>
        <taxon>Methylococcales</taxon>
        <taxon>Methylococcaceae</taxon>
        <taxon>Methylococcus</taxon>
    </lineage>
</organism>